<name>FADA_COLP3</name>
<reference key="1">
    <citation type="journal article" date="2005" name="Proc. Natl. Acad. Sci. U.S.A.">
        <title>The psychrophilic lifestyle as revealed by the genome sequence of Colwellia psychrerythraea 34H through genomic and proteomic analyses.</title>
        <authorList>
            <person name="Methe B.A."/>
            <person name="Nelson K.E."/>
            <person name="Deming J.W."/>
            <person name="Momen B."/>
            <person name="Melamud E."/>
            <person name="Zhang X."/>
            <person name="Moult J."/>
            <person name="Madupu R."/>
            <person name="Nelson W.C."/>
            <person name="Dodson R.J."/>
            <person name="Brinkac L.M."/>
            <person name="Daugherty S.C."/>
            <person name="Durkin A.S."/>
            <person name="DeBoy R.T."/>
            <person name="Kolonay J.F."/>
            <person name="Sullivan S.A."/>
            <person name="Zhou L."/>
            <person name="Davidsen T.M."/>
            <person name="Wu M."/>
            <person name="Huston A.L."/>
            <person name="Lewis M."/>
            <person name="Weaver B."/>
            <person name="Weidman J.F."/>
            <person name="Khouri H."/>
            <person name="Utterback T.R."/>
            <person name="Feldblyum T.V."/>
            <person name="Fraser C.M."/>
        </authorList>
    </citation>
    <scope>NUCLEOTIDE SEQUENCE [LARGE SCALE GENOMIC DNA]</scope>
    <source>
        <strain>34H / ATCC BAA-681</strain>
    </source>
</reference>
<keyword id="KW-0012">Acyltransferase</keyword>
<keyword id="KW-0963">Cytoplasm</keyword>
<keyword id="KW-0276">Fatty acid metabolism</keyword>
<keyword id="KW-0442">Lipid degradation</keyword>
<keyword id="KW-0443">Lipid metabolism</keyword>
<keyword id="KW-0808">Transferase</keyword>
<organism>
    <name type="scientific">Colwellia psychrerythraea (strain 34H / ATCC BAA-681)</name>
    <name type="common">Vibrio psychroerythus</name>
    <dbReference type="NCBI Taxonomy" id="167879"/>
    <lineage>
        <taxon>Bacteria</taxon>
        <taxon>Pseudomonadati</taxon>
        <taxon>Pseudomonadota</taxon>
        <taxon>Gammaproteobacteria</taxon>
        <taxon>Alteromonadales</taxon>
        <taxon>Colwelliaceae</taxon>
        <taxon>Colwellia</taxon>
    </lineage>
</organism>
<sequence length="386" mass="40645">MNEVVIVDCIRTPMGRSKAGVFRNVRAEALSAHLMKQILVRNPALNPEDIEDVIWGCVKQTKEQGFNIARNASLLAGLPKSIGGVTVNRLCGSSMEALHQASTSIMSGQGDVFLIGGVEHMGHVPMMYDVDFDPALNKNIALASGNMGLTAELLGKQHGITREMQDAFGARSHQKAHEAHLAGRWDNEIVATQGHDATGALTLVEHDEVIRPETTAESLSALRPVFDPVNGTVTAGTSSALSDGASAMLVMSAAKAKELGLTPRVKIRGMAVAGCDPATMGFGPVPATKKALKRAGLSIADIELFEFNEAFAAQALSCVRSLKVEDKMDQINLNGGAIALGHPLGCSGSRISGTLINLMEGQDVNIGLATMCIGLGQGIATVFERV</sequence>
<gene>
    <name evidence="1" type="primary">fadA</name>
    <name type="ordered locus">CPS_0392</name>
</gene>
<protein>
    <recommendedName>
        <fullName evidence="1">3-ketoacyl-CoA thiolase</fullName>
        <ecNumber evidence="1">2.3.1.16</ecNumber>
    </recommendedName>
    <alternativeName>
        <fullName evidence="1">Acetyl-CoA acyltransferase</fullName>
    </alternativeName>
    <alternativeName>
        <fullName evidence="1">Beta-ketothiolase</fullName>
    </alternativeName>
    <alternativeName>
        <fullName evidence="1">Fatty acid oxidation complex subunit beta</fullName>
    </alternativeName>
</protein>
<evidence type="ECO:0000255" key="1">
    <source>
        <dbReference type="HAMAP-Rule" id="MF_01620"/>
    </source>
</evidence>
<accession>Q489W4</accession>
<dbReference type="EC" id="2.3.1.16" evidence="1"/>
<dbReference type="EMBL" id="CP000083">
    <property type="protein sequence ID" value="AAZ25024.1"/>
    <property type="molecule type" value="Genomic_DNA"/>
</dbReference>
<dbReference type="RefSeq" id="WP_011041253.1">
    <property type="nucleotide sequence ID" value="NC_003910.7"/>
</dbReference>
<dbReference type="SMR" id="Q489W4"/>
<dbReference type="STRING" id="167879.CPS_0392"/>
<dbReference type="KEGG" id="cps:CPS_0392"/>
<dbReference type="eggNOG" id="COG0183">
    <property type="taxonomic scope" value="Bacteria"/>
</dbReference>
<dbReference type="HOGENOM" id="CLU_031026_2_2_6"/>
<dbReference type="UniPathway" id="UPA00659"/>
<dbReference type="Proteomes" id="UP000000547">
    <property type="component" value="Chromosome"/>
</dbReference>
<dbReference type="GO" id="GO:0005737">
    <property type="term" value="C:cytoplasm"/>
    <property type="evidence" value="ECO:0007669"/>
    <property type="project" value="UniProtKB-SubCell"/>
</dbReference>
<dbReference type="GO" id="GO:0003988">
    <property type="term" value="F:acetyl-CoA C-acyltransferase activity"/>
    <property type="evidence" value="ECO:0007669"/>
    <property type="project" value="UniProtKB-UniRule"/>
</dbReference>
<dbReference type="GO" id="GO:0006635">
    <property type="term" value="P:fatty acid beta-oxidation"/>
    <property type="evidence" value="ECO:0007669"/>
    <property type="project" value="UniProtKB-UniRule"/>
</dbReference>
<dbReference type="GO" id="GO:0010124">
    <property type="term" value="P:phenylacetate catabolic process"/>
    <property type="evidence" value="ECO:0007669"/>
    <property type="project" value="TreeGrafter"/>
</dbReference>
<dbReference type="CDD" id="cd00751">
    <property type="entry name" value="thiolase"/>
    <property type="match status" value="1"/>
</dbReference>
<dbReference type="FunFam" id="3.40.47.10:FF:000010">
    <property type="entry name" value="Acetyl-CoA acetyltransferase (Thiolase)"/>
    <property type="match status" value="1"/>
</dbReference>
<dbReference type="Gene3D" id="3.40.47.10">
    <property type="match status" value="2"/>
</dbReference>
<dbReference type="HAMAP" id="MF_01620">
    <property type="entry name" value="FadA"/>
    <property type="match status" value="1"/>
</dbReference>
<dbReference type="InterPro" id="IPR012805">
    <property type="entry name" value="FadA"/>
</dbReference>
<dbReference type="InterPro" id="IPR002155">
    <property type="entry name" value="Thiolase"/>
</dbReference>
<dbReference type="InterPro" id="IPR016039">
    <property type="entry name" value="Thiolase-like"/>
</dbReference>
<dbReference type="InterPro" id="IPR050215">
    <property type="entry name" value="Thiolase-like_sf_Thiolase"/>
</dbReference>
<dbReference type="InterPro" id="IPR020615">
    <property type="entry name" value="Thiolase_acyl_enz_int_AS"/>
</dbReference>
<dbReference type="InterPro" id="IPR020610">
    <property type="entry name" value="Thiolase_AS"/>
</dbReference>
<dbReference type="InterPro" id="IPR020617">
    <property type="entry name" value="Thiolase_C"/>
</dbReference>
<dbReference type="InterPro" id="IPR020613">
    <property type="entry name" value="Thiolase_CS"/>
</dbReference>
<dbReference type="InterPro" id="IPR020616">
    <property type="entry name" value="Thiolase_N"/>
</dbReference>
<dbReference type="NCBIfam" id="TIGR01930">
    <property type="entry name" value="AcCoA-C-Actrans"/>
    <property type="match status" value="1"/>
</dbReference>
<dbReference type="NCBIfam" id="TIGR02445">
    <property type="entry name" value="fadA"/>
    <property type="match status" value="1"/>
</dbReference>
<dbReference type="NCBIfam" id="NF006510">
    <property type="entry name" value="PRK08947.1"/>
    <property type="match status" value="1"/>
</dbReference>
<dbReference type="PANTHER" id="PTHR43853:SF11">
    <property type="entry name" value="3-KETOACYL-COA THIOLASE FADA"/>
    <property type="match status" value="1"/>
</dbReference>
<dbReference type="PANTHER" id="PTHR43853">
    <property type="entry name" value="3-KETOACYL-COA THIOLASE, PEROXISOMAL"/>
    <property type="match status" value="1"/>
</dbReference>
<dbReference type="Pfam" id="PF02803">
    <property type="entry name" value="Thiolase_C"/>
    <property type="match status" value="1"/>
</dbReference>
<dbReference type="Pfam" id="PF00108">
    <property type="entry name" value="Thiolase_N"/>
    <property type="match status" value="1"/>
</dbReference>
<dbReference type="PIRSF" id="PIRSF000429">
    <property type="entry name" value="Ac-CoA_Ac_transf"/>
    <property type="match status" value="1"/>
</dbReference>
<dbReference type="SUPFAM" id="SSF53901">
    <property type="entry name" value="Thiolase-like"/>
    <property type="match status" value="2"/>
</dbReference>
<dbReference type="PROSITE" id="PS00098">
    <property type="entry name" value="THIOLASE_1"/>
    <property type="match status" value="1"/>
</dbReference>
<dbReference type="PROSITE" id="PS00737">
    <property type="entry name" value="THIOLASE_2"/>
    <property type="match status" value="1"/>
</dbReference>
<dbReference type="PROSITE" id="PS00099">
    <property type="entry name" value="THIOLASE_3"/>
    <property type="match status" value="1"/>
</dbReference>
<feature type="chain" id="PRO_0000206369" description="3-ketoacyl-CoA thiolase">
    <location>
        <begin position="1"/>
        <end position="386"/>
    </location>
</feature>
<feature type="active site" description="Acyl-thioester intermediate" evidence="1">
    <location>
        <position position="91"/>
    </location>
</feature>
<feature type="active site" description="Proton acceptor" evidence="1">
    <location>
        <position position="342"/>
    </location>
</feature>
<feature type="active site" description="Proton acceptor" evidence="1">
    <location>
        <position position="372"/>
    </location>
</feature>
<comment type="function">
    <text evidence="1">Catalyzes the final step of fatty acid oxidation in which acetyl-CoA is released and the CoA ester of a fatty acid two carbons shorter is formed.</text>
</comment>
<comment type="catalytic activity">
    <reaction evidence="1">
        <text>an acyl-CoA + acetyl-CoA = a 3-oxoacyl-CoA + CoA</text>
        <dbReference type="Rhea" id="RHEA:21564"/>
        <dbReference type="ChEBI" id="CHEBI:57287"/>
        <dbReference type="ChEBI" id="CHEBI:57288"/>
        <dbReference type="ChEBI" id="CHEBI:58342"/>
        <dbReference type="ChEBI" id="CHEBI:90726"/>
        <dbReference type="EC" id="2.3.1.16"/>
    </reaction>
</comment>
<comment type="pathway">
    <text evidence="1">Lipid metabolism; fatty acid beta-oxidation.</text>
</comment>
<comment type="subunit">
    <text evidence="1">Heterotetramer of two alpha chains (FadB) and two beta chains (FadA).</text>
</comment>
<comment type="subcellular location">
    <subcellularLocation>
        <location evidence="1">Cytoplasm</location>
    </subcellularLocation>
</comment>
<comment type="similarity">
    <text evidence="1">Belongs to the thiolase-like superfamily. Thiolase family.</text>
</comment>
<proteinExistence type="inferred from homology"/>